<organism>
    <name type="scientific">Xenopus laevis</name>
    <name type="common">African clawed frog</name>
    <dbReference type="NCBI Taxonomy" id="8355"/>
    <lineage>
        <taxon>Eukaryota</taxon>
        <taxon>Metazoa</taxon>
        <taxon>Chordata</taxon>
        <taxon>Craniata</taxon>
        <taxon>Vertebrata</taxon>
        <taxon>Euteleostomi</taxon>
        <taxon>Amphibia</taxon>
        <taxon>Batrachia</taxon>
        <taxon>Anura</taxon>
        <taxon>Pipoidea</taxon>
        <taxon>Pipidae</taxon>
        <taxon>Xenopodinae</taxon>
        <taxon>Xenopus</taxon>
        <taxon>Xenopus</taxon>
    </lineage>
</organism>
<feature type="chain" id="PRO_0000271705" description="BOS complex subunit TMEM147">
    <location>
        <begin position="1"/>
        <end position="225"/>
    </location>
</feature>
<feature type="transmembrane region" description="Helical" evidence="1">
    <location>
        <begin position="1"/>
        <end position="21"/>
    </location>
</feature>
<feature type="topological domain" description="Cytoplasmic" evidence="1">
    <location>
        <begin position="22"/>
        <end position="34"/>
    </location>
</feature>
<feature type="transmembrane region" description="Helical" evidence="1">
    <location>
        <begin position="35"/>
        <end position="58"/>
    </location>
</feature>
<feature type="topological domain" description="Lumenal" evidence="1">
    <location>
        <begin position="59"/>
        <end position="68"/>
    </location>
</feature>
<feature type="transmembrane region" description="Helical" evidence="1">
    <location>
        <begin position="69"/>
        <end position="90"/>
    </location>
</feature>
<feature type="topological domain" description="Cytoplasmic" evidence="1">
    <location>
        <begin position="91"/>
        <end position="100"/>
    </location>
</feature>
<feature type="transmembrane region" description="Helical" evidence="1">
    <location>
        <begin position="101"/>
        <end position="126"/>
    </location>
</feature>
<feature type="topological domain" description="Lumenal" evidence="1">
    <location>
        <begin position="127"/>
        <end position="131"/>
    </location>
</feature>
<feature type="transmembrane region" description="Helical" evidence="1">
    <location>
        <begin position="132"/>
        <end position="157"/>
    </location>
</feature>
<feature type="topological domain" description="Cytoplasmic" evidence="1">
    <location>
        <begin position="158"/>
        <end position="166"/>
    </location>
</feature>
<feature type="transmembrane region" description="Helical" evidence="1">
    <location>
        <begin position="167"/>
        <end position="189"/>
    </location>
</feature>
<feature type="topological domain" description="Lumenal" evidence="1">
    <location>
        <begin position="190"/>
        <end position="196"/>
    </location>
</feature>
<feature type="transmembrane region" description="Helical" evidence="1">
    <location>
        <begin position="197"/>
        <end position="218"/>
    </location>
</feature>
<feature type="topological domain" description="Cytoplasmic" evidence="1">
    <location>
        <begin position="219"/>
        <end position="225"/>
    </location>
</feature>
<gene>
    <name type="primary">tmem147</name>
</gene>
<proteinExistence type="evidence at transcript level"/>
<keyword id="KW-1003">Cell membrane</keyword>
<keyword id="KW-0256">Endoplasmic reticulum</keyword>
<keyword id="KW-0472">Membrane</keyword>
<keyword id="KW-1185">Reference proteome</keyword>
<keyword id="KW-0812">Transmembrane</keyword>
<keyword id="KW-1133">Transmembrane helix</keyword>
<name>TM147_XENLA</name>
<reference key="1">
    <citation type="submission" date="2004-07" db="EMBL/GenBank/DDBJ databases">
        <authorList>
            <consortium name="NIH - Xenopus Gene Collection (XGC) project"/>
        </authorList>
    </citation>
    <scope>NUCLEOTIDE SEQUENCE [LARGE SCALE MRNA]</scope>
    <source>
        <tissue>Ovary</tissue>
    </source>
</reference>
<accession>Q6DFI2</accession>
<protein>
    <recommendedName>
        <fullName evidence="5">BOS complex subunit TMEM147</fullName>
    </recommendedName>
    <alternativeName>
        <fullName evidence="5">Transmembrane protein 147</fullName>
    </alternativeName>
</protein>
<dbReference type="EMBL" id="BC076755">
    <property type="protein sequence ID" value="AAH76755.1"/>
    <property type="molecule type" value="mRNA"/>
</dbReference>
<dbReference type="RefSeq" id="NP_001086527.1">
    <property type="nucleotide sequence ID" value="NM_001093058.1"/>
</dbReference>
<dbReference type="SMR" id="Q6DFI2"/>
<dbReference type="DNASU" id="446362"/>
<dbReference type="GeneID" id="446362"/>
<dbReference type="KEGG" id="xla:446362"/>
<dbReference type="AGR" id="Xenbase:XB-GENE-970272"/>
<dbReference type="CTD" id="446362"/>
<dbReference type="Xenbase" id="XB-GENE-970272">
    <property type="gene designation" value="tmem147.S"/>
</dbReference>
<dbReference type="OMA" id="SKCVYAG"/>
<dbReference type="OrthoDB" id="9993532at2759"/>
<dbReference type="Proteomes" id="UP000186698">
    <property type="component" value="Chromosome 7S"/>
</dbReference>
<dbReference type="Bgee" id="446362">
    <property type="expression patterns" value="Expressed in oocyte and 19 other cell types or tissues"/>
</dbReference>
<dbReference type="GO" id="GO:0005789">
    <property type="term" value="C:endoplasmic reticulum membrane"/>
    <property type="evidence" value="ECO:0000250"/>
    <property type="project" value="UniProtKB"/>
</dbReference>
<dbReference type="GO" id="GO:0031965">
    <property type="term" value="C:nuclear membrane"/>
    <property type="evidence" value="ECO:0000250"/>
    <property type="project" value="UniProtKB"/>
</dbReference>
<dbReference type="GO" id="GO:0005886">
    <property type="term" value="C:plasma membrane"/>
    <property type="evidence" value="ECO:0000250"/>
    <property type="project" value="UniProtKB"/>
</dbReference>
<dbReference type="GO" id="GO:0043022">
    <property type="term" value="F:ribosome binding"/>
    <property type="evidence" value="ECO:0000250"/>
    <property type="project" value="UniProtKB"/>
</dbReference>
<dbReference type="GO" id="GO:0160063">
    <property type="term" value="P:multi-pass transmembrane protein insertion into ER membrane"/>
    <property type="evidence" value="ECO:0000250"/>
    <property type="project" value="UniProtKB"/>
</dbReference>
<dbReference type="GO" id="GO:0036228">
    <property type="term" value="P:protein localization to nuclear inner membrane"/>
    <property type="evidence" value="ECO:0000250"/>
    <property type="project" value="UniProtKB"/>
</dbReference>
<dbReference type="InterPro" id="IPR019164">
    <property type="entry name" value="TMEM147"/>
</dbReference>
<dbReference type="PANTHER" id="PTHR12869:SF0">
    <property type="entry name" value="BOS COMPLEX SUBUNIT TMEM147"/>
    <property type="match status" value="1"/>
</dbReference>
<dbReference type="PANTHER" id="PTHR12869">
    <property type="entry name" value="SMALL SEVEN TRANSMEMBRANE DOMAIN-CONTAINING PROTEIN"/>
    <property type="match status" value="1"/>
</dbReference>
<dbReference type="Pfam" id="PF09767">
    <property type="entry name" value="DUF2053"/>
    <property type="match status" value="1"/>
</dbReference>
<evidence type="ECO:0000250" key="1">
    <source>
        <dbReference type="UniProtKB" id="A0A8I3MKU8"/>
    </source>
</evidence>
<evidence type="ECO:0000250" key="2">
    <source>
        <dbReference type="UniProtKB" id="I6VSD2"/>
    </source>
</evidence>
<evidence type="ECO:0000250" key="3">
    <source>
        <dbReference type="UniProtKB" id="Q9BVK8"/>
    </source>
</evidence>
<evidence type="ECO:0000255" key="4"/>
<evidence type="ECO:0000305" key="5"/>
<comment type="function">
    <text evidence="3">Component of the multi-pass translocon (MPT) complex that mediates insertion of multi-pass membrane proteins into the lipid bilayer of membranes. The MPT complex takes over after the SEC61 complex: following membrane insertion of the first few transmembrane segments of proteins by the SEC61 complex, the MPT complex occludes the lateral gate of the SEC61 complex to promote insertion of subsequent transmembrane regions.</text>
</comment>
<comment type="subunit">
    <text evidence="3">Component of the multi-pass translocon (MPT) complex.</text>
</comment>
<comment type="subcellular location">
    <subcellularLocation>
        <location evidence="3">Endoplasmic reticulum membrane</location>
        <topology evidence="4">Multi-pass membrane protein</topology>
    </subcellularLocation>
    <subcellularLocation>
        <location evidence="2">Cell membrane</location>
        <topology evidence="4">Multi-pass membrane protein</topology>
    </subcellularLocation>
</comment>
<comment type="similarity">
    <text evidence="5">Belongs to the TMEM147 family.</text>
</comment>
<sequence length="225" mass="25407">MTLFHFGNCFALAYFPYFITYKCSGLSEYNAFWRCVQAGATYLCVQLCKMLFLATFFPTWEGAAGAYDFIGEFMKATVDLADLLGLHLVMSRNAGKGEYKIMVAAMGWATAELVMSRCLPLWVGARGIEFDWKYIQMSIDSNISLVHYMAVAALVWMWTRYDLPTHYRLPVTVLLGLSMYKAFLMDCFVHMFIMGSWTALLLKAVITGVLSLSCLTLFVSLVHGN</sequence>